<name>RL4_PYRHO</name>
<gene>
    <name evidence="1" type="primary">rpl4</name>
    <name type="ordered locus">PH1776</name>
    <name type="ORF">PHLG005</name>
</gene>
<dbReference type="EMBL" id="BA000001">
    <property type="protein sequence ID" value="BAA30894.1"/>
    <property type="molecule type" value="Genomic_DNA"/>
</dbReference>
<dbReference type="PIR" id="G71187">
    <property type="entry name" value="G71187"/>
</dbReference>
<dbReference type="RefSeq" id="WP_010885841.1">
    <property type="nucleotide sequence ID" value="NC_000961.1"/>
</dbReference>
<dbReference type="SMR" id="O59420"/>
<dbReference type="STRING" id="70601.gene:9378777"/>
<dbReference type="EnsemblBacteria" id="BAA30894">
    <property type="protein sequence ID" value="BAA30894"/>
    <property type="gene ID" value="BAA30894"/>
</dbReference>
<dbReference type="GeneID" id="1442623"/>
<dbReference type="KEGG" id="pho:PH1776"/>
<dbReference type="eggNOG" id="arCOG04071">
    <property type="taxonomic scope" value="Archaea"/>
</dbReference>
<dbReference type="OrthoDB" id="10737at2157"/>
<dbReference type="Proteomes" id="UP000000752">
    <property type="component" value="Chromosome"/>
</dbReference>
<dbReference type="GO" id="GO:1990904">
    <property type="term" value="C:ribonucleoprotein complex"/>
    <property type="evidence" value="ECO:0007669"/>
    <property type="project" value="UniProtKB-KW"/>
</dbReference>
<dbReference type="GO" id="GO:0005840">
    <property type="term" value="C:ribosome"/>
    <property type="evidence" value="ECO:0007669"/>
    <property type="project" value="UniProtKB-KW"/>
</dbReference>
<dbReference type="GO" id="GO:0019843">
    <property type="term" value="F:rRNA binding"/>
    <property type="evidence" value="ECO:0007669"/>
    <property type="project" value="UniProtKB-UniRule"/>
</dbReference>
<dbReference type="GO" id="GO:0003735">
    <property type="term" value="F:structural constituent of ribosome"/>
    <property type="evidence" value="ECO:0007669"/>
    <property type="project" value="InterPro"/>
</dbReference>
<dbReference type="GO" id="GO:0006412">
    <property type="term" value="P:translation"/>
    <property type="evidence" value="ECO:0007669"/>
    <property type="project" value="UniProtKB-UniRule"/>
</dbReference>
<dbReference type="FunFam" id="3.40.1370.10:FF:000011">
    <property type="entry name" value="50S ribosomal protein L4"/>
    <property type="match status" value="1"/>
</dbReference>
<dbReference type="Gene3D" id="3.40.1370.10">
    <property type="match status" value="1"/>
</dbReference>
<dbReference type="HAMAP" id="MF_01328_A">
    <property type="entry name" value="Ribosomal_uL4_A"/>
    <property type="match status" value="1"/>
</dbReference>
<dbReference type="InterPro" id="IPR002136">
    <property type="entry name" value="Ribosomal_uL4"/>
</dbReference>
<dbReference type="InterPro" id="IPR023574">
    <property type="entry name" value="Ribosomal_uL4_dom_sf"/>
</dbReference>
<dbReference type="InterPro" id="IPR013000">
    <property type="entry name" value="Ribosomal_uL4_euk/arc_CS"/>
</dbReference>
<dbReference type="InterPro" id="IPR045240">
    <property type="entry name" value="Ribosomal_uL4_euk/arch"/>
</dbReference>
<dbReference type="InterPro" id="IPR019970">
    <property type="entry name" value="Ribosomall_uL4-arc"/>
</dbReference>
<dbReference type="NCBIfam" id="TIGR03672">
    <property type="entry name" value="rpl4p_arch"/>
    <property type="match status" value="1"/>
</dbReference>
<dbReference type="PANTHER" id="PTHR19431">
    <property type="entry name" value="60S RIBOSOMAL PROTEIN L4"/>
    <property type="match status" value="1"/>
</dbReference>
<dbReference type="Pfam" id="PF00573">
    <property type="entry name" value="Ribosomal_L4"/>
    <property type="match status" value="1"/>
</dbReference>
<dbReference type="SUPFAM" id="SSF52166">
    <property type="entry name" value="Ribosomal protein L4"/>
    <property type="match status" value="1"/>
</dbReference>
<dbReference type="PROSITE" id="PS00939">
    <property type="entry name" value="RIBOSOMAL_L1E"/>
    <property type="match status" value="1"/>
</dbReference>
<feature type="chain" id="PRO_0000129341" description="Large ribosomal subunit protein uL4">
    <location>
        <begin position="1"/>
        <end position="255"/>
    </location>
</feature>
<keyword id="KW-0687">Ribonucleoprotein</keyword>
<keyword id="KW-0689">Ribosomal protein</keyword>
<keyword id="KW-0694">RNA-binding</keyword>
<keyword id="KW-0699">rRNA-binding</keyword>
<protein>
    <recommendedName>
        <fullName evidence="1">Large ribosomal subunit protein uL4</fullName>
    </recommendedName>
    <alternativeName>
        <fullName evidence="2">50S ribosomal protein L4</fullName>
    </alternativeName>
</protein>
<accession>O59420</accession>
<proteinExistence type="inferred from homology"/>
<sequence>MKVKVFDLNGQPVDEIELPRVFLTPFRPDLIRRAVIASWTHRIQPQGRDPMAGKRRVTENIGKGHGMARVERLKTPPRYAAFVPFARGGRRAHPPKVEKIIWEGINKKERRLAIMSAIAATANYDIVKSRGHIVDNVPQLPLIVVDDLQKVSKTRETREIFKKLGIWEDIERAKEKSGVRAGKGKMRGRRYKKAKGPLIVVGKNEGIVFGARNHPGVDVVVVDNLGVEHLAPGTHPGRLTVWTVSAIERLREIYG</sequence>
<organism>
    <name type="scientific">Pyrococcus horikoshii (strain ATCC 700860 / DSM 12428 / JCM 9974 / NBRC 100139 / OT-3)</name>
    <dbReference type="NCBI Taxonomy" id="70601"/>
    <lineage>
        <taxon>Archaea</taxon>
        <taxon>Methanobacteriati</taxon>
        <taxon>Methanobacteriota</taxon>
        <taxon>Thermococci</taxon>
        <taxon>Thermococcales</taxon>
        <taxon>Thermococcaceae</taxon>
        <taxon>Pyrococcus</taxon>
    </lineage>
</organism>
<reference key="1">
    <citation type="journal article" date="1998" name="DNA Res.">
        <title>Complete sequence and gene organization of the genome of a hyper-thermophilic archaebacterium, Pyrococcus horikoshii OT3.</title>
        <authorList>
            <person name="Kawarabayasi Y."/>
            <person name="Sawada M."/>
            <person name="Horikawa H."/>
            <person name="Haikawa Y."/>
            <person name="Hino Y."/>
            <person name="Yamamoto S."/>
            <person name="Sekine M."/>
            <person name="Baba S."/>
            <person name="Kosugi H."/>
            <person name="Hosoyama A."/>
            <person name="Nagai Y."/>
            <person name="Sakai M."/>
            <person name="Ogura K."/>
            <person name="Otsuka R."/>
            <person name="Nakazawa H."/>
            <person name="Takamiya M."/>
            <person name="Ohfuku Y."/>
            <person name="Funahashi T."/>
            <person name="Tanaka T."/>
            <person name="Kudoh Y."/>
            <person name="Yamazaki J."/>
            <person name="Kushida N."/>
            <person name="Oguchi A."/>
            <person name="Aoki K."/>
            <person name="Yoshizawa T."/>
            <person name="Nakamura Y."/>
            <person name="Robb F.T."/>
            <person name="Horikoshi K."/>
            <person name="Masuchi Y."/>
            <person name="Shizuya H."/>
            <person name="Kikuchi H."/>
        </authorList>
    </citation>
    <scope>NUCLEOTIDE SEQUENCE [LARGE SCALE GENOMIC DNA]</scope>
    <source>
        <strain>ATCC 700860 / DSM 12428 / JCM 9974 / NBRC 100139 / OT-3</strain>
    </source>
</reference>
<evidence type="ECO:0000255" key="1">
    <source>
        <dbReference type="HAMAP-Rule" id="MF_01328"/>
    </source>
</evidence>
<evidence type="ECO:0000305" key="2"/>
<comment type="function">
    <text evidence="1">One of the primary rRNA binding proteins, this protein initially binds near the 5'-end of the 23S rRNA. It is important during the early stages of 50S assembly. It makes multiple contacts with different domains of the 23S rRNA in the assembled 50S subunit and ribosome.</text>
</comment>
<comment type="function">
    <text evidence="1">Forms part of the polypeptide exit tunnel.</text>
</comment>
<comment type="subunit">
    <text evidence="1">Part of the 50S ribosomal subunit.</text>
</comment>
<comment type="similarity">
    <text evidence="1">Belongs to the universal ribosomal protein uL4 family.</text>
</comment>